<name>FXL14_BOVIN</name>
<comment type="function">
    <text evidence="1">Substrate-recognition component of some SCF (SKP1-CUL1-F-box protein)-type E3 ubiquitin-protein ligase complexes. The SCF(FBXL14) complex acts by mediating ubiquitination and subsequent degradation of SNAI1 (By similarity).</text>
</comment>
<comment type="subunit">
    <text evidence="1">Part of a SCF (SKP1-cullin-F-box) ubiquitin-protein ligase complex. Interacts with SKP1 and CUL1. Interacts with SNAI1; the interaction requires the phosphorylation of the two serine residues in the substrate destruction motif D-S-G-X(2,3,4)-S (By similarity).</text>
</comment>
<comment type="subcellular location">
    <subcellularLocation>
        <location evidence="1">Cytoplasm</location>
    </subcellularLocation>
</comment>
<proteinExistence type="evidence at transcript level"/>
<organism>
    <name type="scientific">Bos taurus</name>
    <name type="common">Bovine</name>
    <dbReference type="NCBI Taxonomy" id="9913"/>
    <lineage>
        <taxon>Eukaryota</taxon>
        <taxon>Metazoa</taxon>
        <taxon>Chordata</taxon>
        <taxon>Craniata</taxon>
        <taxon>Vertebrata</taxon>
        <taxon>Euteleostomi</taxon>
        <taxon>Mammalia</taxon>
        <taxon>Eutheria</taxon>
        <taxon>Laurasiatheria</taxon>
        <taxon>Artiodactyla</taxon>
        <taxon>Ruminantia</taxon>
        <taxon>Pecora</taxon>
        <taxon>Bovidae</taxon>
        <taxon>Bovinae</taxon>
        <taxon>Bos</taxon>
    </lineage>
</organism>
<sequence length="400" mass="43864">METHISCLFPELLAMIFGYLDVRDKGRAAQVCTAWRDAAYHKSVWRGVEAKLHLRRANPSLFPSLQARGIRRVQILSLRRSLSYVIQGMANIESLNLSGCYNLTDNGLGHAFVQEIGSLRALNLSLCKQITDSSLGRIAQYLKGLEVLELGGCSNITNTGLLLIAWGLQRLKSLNLRSCRHLSDVGIGHLAGMTRSAAEGCLGLEQLTLQDCQKLTDLSLKHISRGLTGLRLLNLSFCGGISDAGLLHLSHMGSLRSLNLRSCDNISDTGIMHLAMGSLRLSGLDVSFCDKVGDQSLAYIAQGLDGLKSLSLCSCHISDDGINRMVRQMHGLRTLNIGQCVRITDKGLELIAEHLSQLTGIDLYGCTRITKRGLERITQLPCLKVLNLGLWQMTDSEKVR</sequence>
<dbReference type="EMBL" id="BC118093">
    <property type="protein sequence ID" value="AAI18094.1"/>
    <property type="molecule type" value="mRNA"/>
</dbReference>
<dbReference type="RefSeq" id="NP_001069415.1">
    <property type="nucleotide sequence ID" value="NM_001075947.1"/>
</dbReference>
<dbReference type="RefSeq" id="XP_005207331.1">
    <property type="nucleotide sequence ID" value="XM_005207274.5"/>
</dbReference>
<dbReference type="SMR" id="Q17R01"/>
<dbReference type="FunCoup" id="Q17R01">
    <property type="interactions" value="1345"/>
</dbReference>
<dbReference type="STRING" id="9913.ENSBTAP00000058517"/>
<dbReference type="PaxDb" id="9913-ENSBTAP00000010237"/>
<dbReference type="GeneID" id="531211"/>
<dbReference type="KEGG" id="bta:531211"/>
<dbReference type="CTD" id="144699"/>
<dbReference type="eggNOG" id="KOG1947">
    <property type="taxonomic scope" value="Eukaryota"/>
</dbReference>
<dbReference type="HOGENOM" id="CLU_016072_7_0_1"/>
<dbReference type="InParanoid" id="Q17R01"/>
<dbReference type="OrthoDB" id="2585512at2759"/>
<dbReference type="TreeFam" id="TF313434"/>
<dbReference type="Proteomes" id="UP000009136">
    <property type="component" value="Unplaced"/>
</dbReference>
<dbReference type="GO" id="GO:0005737">
    <property type="term" value="C:cytoplasm"/>
    <property type="evidence" value="ECO:0000250"/>
    <property type="project" value="UniProtKB"/>
</dbReference>
<dbReference type="GO" id="GO:0019005">
    <property type="term" value="C:SCF ubiquitin ligase complex"/>
    <property type="evidence" value="ECO:0000318"/>
    <property type="project" value="GO_Central"/>
</dbReference>
<dbReference type="GO" id="GO:0004842">
    <property type="term" value="F:ubiquitin-protein transferase activity"/>
    <property type="evidence" value="ECO:0000250"/>
    <property type="project" value="UniProtKB"/>
</dbReference>
<dbReference type="GO" id="GO:0031146">
    <property type="term" value="P:SCF-dependent proteasomal ubiquitin-dependent protein catabolic process"/>
    <property type="evidence" value="ECO:0000318"/>
    <property type="project" value="GO_Central"/>
</dbReference>
<dbReference type="GO" id="GO:0006511">
    <property type="term" value="P:ubiquitin-dependent protein catabolic process"/>
    <property type="evidence" value="ECO:0000250"/>
    <property type="project" value="UniProtKB"/>
</dbReference>
<dbReference type="CDD" id="cd22125">
    <property type="entry name" value="F-box_FBXL14"/>
    <property type="match status" value="1"/>
</dbReference>
<dbReference type="FunFam" id="3.80.10.10:FF:000051">
    <property type="entry name" value="F-box and leucine-rich repeat protein 14"/>
    <property type="match status" value="1"/>
</dbReference>
<dbReference type="FunFam" id="3.80.10.10:FF:000075">
    <property type="entry name" value="F-box/LRR-repeat protein 14 isoform X1"/>
    <property type="match status" value="1"/>
</dbReference>
<dbReference type="FunFam" id="1.20.1280.50:FF:000059">
    <property type="entry name" value="Partner of Paired"/>
    <property type="match status" value="1"/>
</dbReference>
<dbReference type="Gene3D" id="3.80.10.10">
    <property type="entry name" value="Ribonuclease Inhibitor"/>
    <property type="match status" value="2"/>
</dbReference>
<dbReference type="InterPro" id="IPR036047">
    <property type="entry name" value="F-box-like_dom_sf"/>
</dbReference>
<dbReference type="InterPro" id="IPR001810">
    <property type="entry name" value="F-box_dom"/>
</dbReference>
<dbReference type="InterPro" id="IPR047932">
    <property type="entry name" value="FBXL14_F-box"/>
</dbReference>
<dbReference type="InterPro" id="IPR001611">
    <property type="entry name" value="Leu-rich_rpt"/>
</dbReference>
<dbReference type="InterPro" id="IPR006553">
    <property type="entry name" value="Leu-rich_rpt_Cys-con_subtyp"/>
</dbReference>
<dbReference type="InterPro" id="IPR032675">
    <property type="entry name" value="LRR_dom_sf"/>
</dbReference>
<dbReference type="PANTHER" id="PTHR13318">
    <property type="entry name" value="PARTNER OF PAIRED, ISOFORM B-RELATED"/>
    <property type="match status" value="1"/>
</dbReference>
<dbReference type="Pfam" id="PF12937">
    <property type="entry name" value="F-box-like"/>
    <property type="match status" value="1"/>
</dbReference>
<dbReference type="Pfam" id="PF13516">
    <property type="entry name" value="LRR_6"/>
    <property type="match status" value="4"/>
</dbReference>
<dbReference type="SMART" id="SM00367">
    <property type="entry name" value="LRR_CC"/>
    <property type="match status" value="11"/>
</dbReference>
<dbReference type="SUPFAM" id="SSF81383">
    <property type="entry name" value="F-box domain"/>
    <property type="match status" value="1"/>
</dbReference>
<dbReference type="SUPFAM" id="SSF52047">
    <property type="entry name" value="RNI-like"/>
    <property type="match status" value="1"/>
</dbReference>
<reference key="1">
    <citation type="submission" date="2006-06" db="EMBL/GenBank/DDBJ databases">
        <authorList>
            <consortium name="NIH - Mammalian Gene Collection (MGC) project"/>
        </authorList>
    </citation>
    <scope>NUCLEOTIDE SEQUENCE [LARGE SCALE MRNA]</scope>
    <source>
        <strain>Hereford</strain>
        <tissue>Uterus</tissue>
    </source>
</reference>
<accession>Q17R01</accession>
<evidence type="ECO:0000250" key="1"/>
<feature type="chain" id="PRO_0000285083" description="F-box/LRR-repeat protein 14">
    <location>
        <begin position="1"/>
        <end position="400"/>
    </location>
</feature>
<feature type="domain" description="F-box">
    <location>
        <begin position="2"/>
        <end position="48"/>
    </location>
</feature>
<feature type="repeat" description="LRR 1">
    <location>
        <begin position="144"/>
        <end position="163"/>
    </location>
</feature>
<feature type="repeat" description="LRR 2">
    <location>
        <begin position="170"/>
        <end position="191"/>
    </location>
</feature>
<feature type="repeat" description="LRR 3">
    <location>
        <begin position="203"/>
        <end position="225"/>
    </location>
</feature>
<feature type="repeat" description="LRR 4">
    <location>
        <begin position="229"/>
        <end position="250"/>
    </location>
</feature>
<feature type="repeat" description="LRR 5">
    <location>
        <begin position="254"/>
        <end position="275"/>
    </location>
</feature>
<feature type="region of interest" description="Required for down-regulation of SNAI1" evidence="1">
    <location>
        <begin position="2"/>
        <end position="48"/>
    </location>
</feature>
<keyword id="KW-0963">Cytoplasm</keyword>
<keyword id="KW-0433">Leucine-rich repeat</keyword>
<keyword id="KW-1185">Reference proteome</keyword>
<keyword id="KW-0677">Repeat</keyword>
<keyword id="KW-0833">Ubl conjugation pathway</keyword>
<protein>
    <recommendedName>
        <fullName>F-box/LRR-repeat protein 14</fullName>
    </recommendedName>
    <alternativeName>
        <fullName>F-box and leucine-rich repeat protein 14</fullName>
    </alternativeName>
</protein>
<gene>
    <name type="primary">FBXL14</name>
</gene>